<comment type="function">
    <text evidence="1 10 12 19">Postsynaptic adhesion molecule that binds to presynaptic neurexins to mediate both excitatory and inhibitory synapse formation (PubMed:25352602). Promotes synapse development by acting as a cell adhesion molecule at the postsynaptic membrane, which associates with both neurexin-alpha and neurexin-beta proteins at the presynaptic membrane (PubMed:25352602). Regulates the balance between excitatory and inhibitory synapses by inhibiting formation of excitatory parallel-fiber synapses and promoting formation of inhibitory synapses in the same neuron (By similarity). May also be involved in ascorbate (vitamin C) uptake via its interaction with SLC23A2/SVCT2 (PubMed:34673103). Complex formation with APBA2 and APP, stabilizes APP metabolism and enhances APBA2-mediated suppression of beta-APP40 secretion, due to the retardation of intracellular APP maturation (Probable) (PubMed:12972431).</text>
</comment>
<comment type="function">
    <molecule>Isoform CLSTN3beta</molecule>
    <text evidence="1">Adipose-specific isoform that plays a key role in adaptive thermogenesis. Facilitates the efficient use of stored triglyceride by promoting multilocular morphology of thermogenic adipocytes: acts by inhibiting the activity of CIDEA and CIDEC on lipid droplets, thereby preventing lipid droplet fusion and facilitating lipid utilization. May also participate in adaptive thermogenesis by promoting sympathetic innervation of thermogenic adipose tissue: acts by driving secretion of neurotrophic factor S100B from brown adipocytes, stimulating neurite outgrowth from sympathetic neurons.</text>
</comment>
<comment type="subunit">
    <text evidence="1 7 12">Interacts (via cadherin domains) with both alpha and beta isoforms of neurexins (NRXN1, NRXN2 and NRXN3) (By similarity). Directly interacts with APBA2 (PubMed:12972431). Forms a tripartite complex with APBA2 and APP (PubMed:12972431). Interacts with low affinity with KLC1 (By similarity). Interacts with SLC23A2/SVCT2 (PubMed:34673103).</text>
</comment>
<comment type="subunit">
    <molecule>Isoform CLSTN3beta</molecule>
    <text evidence="1">Interacts with CIDEA; inhibiting the lipid transferase activity of CIDEA (By similarity). Interacts with CIDEC; inhibiting the lipid transferase activity of CIDEC (By similarity).</text>
</comment>
<comment type="interaction">
    <interactant intactId="EBI-11291074">
        <id>Q9BQT9</id>
    </interactant>
    <interactant intactId="EBI-2807956">
        <id>Q96FZ5</id>
        <label>CMTM7</label>
    </interactant>
    <organismsDiffer>false</organismsDiffer>
    <experiments>3</experiments>
</comment>
<comment type="interaction">
    <interactant intactId="EBI-11291074">
        <id>Q9BQT9</id>
    </interactant>
    <interactant intactId="EBI-3932027">
        <id>P21145</id>
        <label>MAL</label>
    </interactant>
    <organismsDiffer>false</organismsDiffer>
    <experiments>3</experiments>
</comment>
<comment type="interaction">
    <interactant intactId="EBI-11291074">
        <id>Q9BQT9</id>
    </interactant>
    <interactant intactId="EBI-3919611">
        <id>Q16617</id>
        <label>NKG7</label>
    </interactant>
    <organismsDiffer>false</organismsDiffer>
    <experiments>3</experiments>
</comment>
<comment type="interaction">
    <interactant intactId="EBI-11291074">
        <id>Q9BQT9</id>
    </interactant>
    <interactant intactId="EBI-2804156">
        <id>Q6UX06</id>
        <label>OLFM4</label>
    </interactant>
    <organismsDiffer>false</organismsDiffer>
    <experiments>3</experiments>
</comment>
<comment type="interaction">
    <interactant intactId="EBI-11291074">
        <id>Q9BQT9</id>
    </interactant>
    <interactant intactId="EBI-12092917">
        <id>Q9UHJ9-5</id>
        <label>PGAP2</label>
    </interactant>
    <organismsDiffer>false</organismsDiffer>
    <experiments>3</experiments>
</comment>
<comment type="interaction">
    <interactant intactId="EBI-11291074">
        <id>Q9BQT9</id>
    </interactant>
    <interactant intactId="EBI-12845616">
        <id>Q6UX40</id>
        <label>TMEM107</label>
    </interactant>
    <organismsDiffer>false</organismsDiffer>
    <experiments>3</experiments>
</comment>
<comment type="interaction">
    <interactant intactId="EBI-11291074">
        <id>Q9BQT9</id>
    </interactant>
    <interactant intactId="EBI-3922833">
        <id>Q969K7</id>
        <label>TMEM54</label>
    </interactant>
    <organismsDiffer>false</organismsDiffer>
    <experiments>3</experiments>
</comment>
<comment type="interaction">
    <interactant intactId="EBI-11291074">
        <id>Q9BQT9</id>
    </interactant>
    <interactant intactId="EBI-12111910">
        <id>Q5BJF2</id>
        <label>TMEM97</label>
    </interactant>
    <organismsDiffer>false</organismsDiffer>
    <experiments>3</experiments>
</comment>
<comment type="interaction">
    <interactant intactId="EBI-11291074">
        <id>Q9BQT9</id>
    </interactant>
    <interactant intactId="EBI-11996766">
        <id>Q8N609</id>
        <label>TRAM1L1</label>
    </interactant>
    <organismsDiffer>false</organismsDiffer>
    <experiments>3</experiments>
</comment>
<comment type="interaction">
    <interactant intactId="EBI-11291074">
        <id>Q9BQT9</id>
    </interactant>
    <interactant intactId="EBI-10268111">
        <id>Q8N966</id>
        <label>ZDHHC22</label>
    </interactant>
    <organismsDiffer>false</organismsDiffer>
    <experiments>3</experiments>
</comment>
<comment type="subcellular location">
    <subcellularLocation>
        <location evidence="1">Postsynaptic cell membrane</location>
        <topology evidence="3">Single-pass type I membrane protein</topology>
    </subcellularLocation>
    <subcellularLocation>
        <location evidence="1">Endoplasmic reticulum membrane</location>
        <topology evidence="3">Single-pass type I membrane protein</topology>
    </subcellularLocation>
    <subcellularLocation>
        <location evidence="1">Golgi apparatus membrane</location>
        <topology evidence="3">Single-pass type I membrane protein</topology>
    </subcellularLocation>
    <subcellularLocation>
        <location evidence="1">Cell projection</location>
        <location evidence="1">Dendrite</location>
    </subcellularLocation>
    <text evidence="1">Most prominent in the postsynaptic specializations of asymmetric (type I) synapses with both axodendritic and axospinous localization.</text>
</comment>
<comment type="subcellular location">
    <molecule>Isoform CLSTN3beta</molecule>
    <subcellularLocation>
        <location evidence="1">Lipid droplet</location>
    </subcellularLocation>
    <subcellularLocation>
        <location evidence="1">Endoplasmic reticulum membrane</location>
        <topology evidence="3">Single-pass membrane protein</topology>
    </subcellularLocation>
    <text evidence="1">Localizes to endoplasmic reticulum-lipid droplet contact sites through the partitioning of its N-terminal hydrophobic hairpins onto lipid droplets while its C-terminal transmembrane domain remains anchored in the endoplasmic reticulum.</text>
</comment>
<comment type="alternative products">
    <event type="alternative splicing"/>
    <isoform>
        <id>Q9BQT9-1</id>
        <name>1</name>
        <sequence type="displayed"/>
    </isoform>
    <isoform>
        <id>Q9BQT9-2</id>
        <name>2</name>
        <sequence type="described" ref="VSP_043748"/>
    </isoform>
    <isoform>
        <id>Q9BQT9-3</id>
        <name evidence="1">CLSTN3beta</name>
        <sequence type="described" ref="VSP_061880"/>
    </isoform>
</comment>
<comment type="tissue specificity">
    <text evidence="6 7">According to PubMed:12498782, expressed predominantly in the brain and in kidney (PubMed:12498782). Low levels in heart, skeletal muscle, liver, placenta, pancreas and lung (PubMed:12498782). According to PubMed:12972431, predominant expression in brain, and only marginal in kidney (PubMed:12972431). In brain, present throughout all cortical layers, highest levels in GABAergic neurons (based on morphology and distribution pattern) (PubMed:12972431).</text>
</comment>
<comment type="tissue specificity">
    <molecule>Isoform CLSTN3beta</molecule>
    <text evidence="11">Expression is restricted to adipose tissue, with high expression in multilocular thermogenic adipocytes (brown adipose tissue).</text>
</comment>
<comment type="domain">
    <text evidence="2">The cytoplasmic domain binds synaptic Ca(2+).</text>
</comment>
<comment type="PTM">
    <text evidence="8">Proteolytically processed under normal cellular conditions (PubMed:15037614). A primary zeta-cleavage generates a large extracellular (soluble) N-terminal domain (sAlc) and a short C-terminal transmembrane fragment (CTF1) (PubMed:15037614). A secondary cleavage catalyzed by gamma-secretase within the transmembrane domain releases the beta-Alc-beta chain in the extracellular milieu and produces an intracellular fragment (AlcICD) (PubMed:15037614). This processing is strongly suppressed in the tripartite complex formed with APBA2 and APP, which seems to prevent the association with gamma-secretase (PubMed:15037614).</text>
</comment>
<comment type="PTM">
    <molecule>Isoform CLSTN3beta</molecule>
    <text evidence="1">Ubiquitinated: endoplasmic reticulum-localized protein is ubiquitinated and degraded by the endoplasmic reticulum-associated degradation (ERAD) pathway.</text>
</comment>
<comment type="similarity">
    <text evidence="18">Belongs to the calsyntenin family.</text>
</comment>
<comment type="sequence caution" evidence="18">
    <conflict type="erroneous initiation">
        <sequence resource="EMBL-CDS" id="BAA34446"/>
    </conflict>
    <text>Extended N-terminus.</text>
</comment>
<feature type="signal peptide" evidence="3">
    <location>
        <begin position="1"/>
        <end position="19"/>
    </location>
</feature>
<feature type="chain" id="PRO_0000004026" description="Calsyntenin-3">
    <location>
        <begin position="20"/>
        <end position="956"/>
    </location>
</feature>
<feature type="topological domain" description="Extracellular" evidence="3">
    <location>
        <begin position="20"/>
        <end position="847"/>
    </location>
</feature>
<feature type="transmembrane region" description="Helical" evidence="3">
    <location>
        <begin position="848"/>
        <end position="868"/>
    </location>
</feature>
<feature type="topological domain" description="Cytoplasmic" evidence="3">
    <location>
        <begin position="869"/>
        <end position="956"/>
    </location>
</feature>
<feature type="domain" description="Cadherin 1" evidence="4">
    <location>
        <begin position="29"/>
        <end position="145"/>
    </location>
</feature>
<feature type="domain" description="Cadherin 2" evidence="4">
    <location>
        <begin position="146"/>
        <end position="246"/>
    </location>
</feature>
<feature type="region of interest" description="Disordered" evidence="5">
    <location>
        <begin position="916"/>
        <end position="956"/>
    </location>
</feature>
<feature type="compositionally biased region" description="Acidic residues" evidence="5">
    <location>
        <begin position="927"/>
        <end position="937"/>
    </location>
</feature>
<feature type="compositionally biased region" description="Basic and acidic residues" evidence="5">
    <location>
        <begin position="943"/>
        <end position="956"/>
    </location>
</feature>
<feature type="glycosylation site" description="N-linked (GlcNAc...) asparagine" evidence="3">
    <location>
        <position position="299"/>
    </location>
</feature>
<feature type="glycosylation site" description="N-linked (GlcNAc...) asparagine" evidence="3">
    <location>
        <position position="327"/>
    </location>
</feature>
<feature type="glycosylation site" description="N-linked (GlcNAc...) asparagine" evidence="3">
    <location>
        <position position="347"/>
    </location>
</feature>
<feature type="glycosylation site" description="N-linked (GlcNAc...) asparagine" evidence="3">
    <location>
        <position position="507"/>
    </location>
</feature>
<feature type="glycosylation site" description="N-linked (GlcNAc...) asparagine" evidence="3">
    <location>
        <position position="740"/>
    </location>
</feature>
<feature type="splice variant" id="VSP_061880" description="In isoform CLSTN3beta.">
    <original>MTLLLLPLLLASLLASCSCNKANKHKPWIEAEYQGIVMENDNTVLLNPPLFALDKDAPLRYAGEICGFRLHGSGVPFEAVILDKATGEGLIRAKEPVDCEAQKEHTFTIQAYDCGEGPDGANTKKSHKATVHVRVNDVNEFAPVFVERLYRAAVTEGKLYDRILRVEAIDGDCSPQYSQICYYEILTPNTPFLIDNDGNIENTEKLQYSGERLYKFTVTAYDCGKKRAADDAEVEIQVKPTCKPSWQGWNKRIEYAPGAGSLALFPGIRLETCDEPLWNIQATIELQTSHVAKGCDRDNYSERALRKLCGAATGEVDLLPMPGPNANWTAGLSVHYSQDSSLIYWFNGTQAVQVPLGGPSGLGSGPQDSLSDHFTLSFWMKHGVTPNKGKKEEETIVCNTVQNEDGFSHYSLTVHGCRIAFLYWPLLESARPVKFLWKLEQVCDDEWHHYALNLEFPTVTLYTDGISFDPALIHDNGLIHPPRREPALMIGACWTEEKNKEKEKGDNSTDTTQGDPLSIHHYFHGYLAGFSVRSGRLESREVIECLYACREGLDYRDFESLGKGMKVHVNPSQSLLTLEGDDVETFNHALQHVAYMNTLRFATPGVRPLRLTTAVKCFSEESCVSIPEVEGYVVVLQPDAPQILLSGTAHFARPAVDFEGTNGVPLFPDLQITCSISHQVEAKKDESWQGTVTDTRMSDEIVHNLDGCEISLVGDDLDPERESLLLDTTSLQQRGLELTNTSAYLTIAGVESITVYEEILRQARYRLRHGAALYTRKFRLSCSEMNGRYSSNEFIVEVNVLHSMNRVAHPSHVLSSQQFLHRGHQPPPEMAGHSLASSHRNSM</original>
    <variation>MHGGQGCAPMWGVVTQLPVRALGLEVRVWGLCLHLLSLGLRAFLLFFLVLLRELCVCVQEAGRAVLMAARSVALTAHVCSVYVFLQGVAWSAQLVGSWVMLHIWLYRALLETPRRVPLLPQCEQAARWLVWASMQAGKGLARVWGVATFVQLCAHTVFLSMYLCMHICFAAISSKVRVRVNAPFCVSVPLKVHAPLSLGIKVGLQGQKHGRATGEAGMPQGEMLGKQEPQTSRSPKPTRRREVSRSELSPV</variation>
    <location>
        <begin position="1"/>
        <end position="843"/>
    </location>
</feature>
<feature type="splice variant" id="VSP_043748" description="In isoform 2." evidence="15 17">
    <original>MTLLLLPLLLASLLASCSCNK</original>
    <variation>MVLGCELSGSTRVVVGVEALLTGASSPLPGVGP</variation>
    <location>
        <begin position="1"/>
        <end position="21"/>
    </location>
</feature>
<feature type="sequence variant" id="VAR_048583" description="In dbSNP:rs7302230.">
    <original>S</original>
    <variation>G</variation>
    <location>
        <position position="209"/>
    </location>
</feature>
<feature type="sequence variant" id="VAR_036114" description="In a colorectal cancer sample; somatic mutation." evidence="9">
    <original>H</original>
    <variation>Y</variation>
    <location>
        <position position="874"/>
    </location>
</feature>
<feature type="topological domain" description="Cytoplasmic" evidence="1">
    <location sequence="Q9BQT9-3">
        <begin position="1"/>
        <end position="30"/>
    </location>
</feature>
<feature type="intramembrane region" description="Helical" evidence="1">
    <location sequence="Q9BQT9-3">
        <begin position="31"/>
        <end position="51"/>
    </location>
</feature>
<feature type="topological domain" description="Cytoplasmic" evidence="1">
    <location sequence="Q9BQT9-3">
        <begin position="52"/>
        <end position="71"/>
    </location>
</feature>
<feature type="intramembrane region" description="Helical" evidence="1">
    <location sequence="Q9BQT9-3">
        <begin position="72"/>
        <end position="94"/>
    </location>
</feature>
<feature type="topological domain" description="Cytoplasmic" evidence="1">
    <location sequence="Q9BQT9-3">
        <begin position="95"/>
        <end position="151"/>
    </location>
</feature>
<feature type="intramembrane region" description="Helical" evidence="1">
    <location sequence="Q9BQT9-3">
        <begin position="152"/>
        <end position="172"/>
    </location>
</feature>
<feature type="topological domain" description="Cytoplasmic" evidence="1">
    <location sequence="Q9BQT9-3">
        <begin position="173"/>
        <end position="255"/>
    </location>
</feature>
<feature type="transmembrane region" description="Helical" evidence="3">
    <location sequence="Q9BQT9-3">
        <begin position="256"/>
        <end position="276"/>
    </location>
</feature>
<feature type="topological domain" description="Lumenal" evidence="1">
    <location sequence="Q9BQT9-3">
        <begin position="277"/>
        <end position="364"/>
    </location>
</feature>
<feature type="sequence variant" id="VAR_087903" description="Probable risk factor for obesity; dbSNP:rs7296261." evidence="13">
    <original>R</original>
    <variation>Q</variation>
    <location sequence="Q9BQT9-3">
        <position position="142"/>
    </location>
</feature>
<name>CSTN3_HUMAN</name>
<keyword id="KW-0025">Alternative splicing</keyword>
<keyword id="KW-0106">Calcium</keyword>
<keyword id="KW-0130">Cell adhesion</keyword>
<keyword id="KW-1003">Cell membrane</keyword>
<keyword id="KW-0966">Cell projection</keyword>
<keyword id="KW-0256">Endoplasmic reticulum</keyword>
<keyword id="KW-0325">Glycoprotein</keyword>
<keyword id="KW-0333">Golgi apparatus</keyword>
<keyword id="KW-0551">Lipid droplet</keyword>
<keyword id="KW-0472">Membrane</keyword>
<keyword id="KW-0628">Postsynaptic cell membrane</keyword>
<keyword id="KW-1267">Proteomics identification</keyword>
<keyword id="KW-1185">Reference proteome</keyword>
<keyword id="KW-0677">Repeat</keyword>
<keyword id="KW-0732">Signal</keyword>
<keyword id="KW-0770">Synapse</keyword>
<keyword id="KW-0812">Transmembrane</keyword>
<keyword id="KW-1133">Transmembrane helix</keyword>
<keyword id="KW-0832">Ubl conjugation</keyword>
<evidence type="ECO:0000250" key="1">
    <source>
        <dbReference type="UniProtKB" id="Q99JH7"/>
    </source>
</evidence>
<evidence type="ECO:0000250" key="2">
    <source>
        <dbReference type="UniProtKB" id="Q9EPL2"/>
    </source>
</evidence>
<evidence type="ECO:0000255" key="3"/>
<evidence type="ECO:0000255" key="4">
    <source>
        <dbReference type="PROSITE-ProRule" id="PRU00043"/>
    </source>
</evidence>
<evidence type="ECO:0000256" key="5">
    <source>
        <dbReference type="SAM" id="MobiDB-lite"/>
    </source>
</evidence>
<evidence type="ECO:0000269" key="6">
    <source>
    </source>
</evidence>
<evidence type="ECO:0000269" key="7">
    <source>
    </source>
</evidence>
<evidence type="ECO:0000269" key="8">
    <source>
    </source>
</evidence>
<evidence type="ECO:0000269" key="9">
    <source>
    </source>
</evidence>
<evidence type="ECO:0000269" key="10">
    <source>
    </source>
</evidence>
<evidence type="ECO:0000269" key="11">
    <source>
    </source>
</evidence>
<evidence type="ECO:0000269" key="12">
    <source>
    </source>
</evidence>
<evidence type="ECO:0000269" key="13">
    <source>
    </source>
</evidence>
<evidence type="ECO:0000303" key="14">
    <source>
    </source>
</evidence>
<evidence type="ECO:0000303" key="15">
    <source>
    </source>
</evidence>
<evidence type="ECO:0000303" key="16">
    <source>
    </source>
</evidence>
<evidence type="ECO:0000303" key="17">
    <source>
    </source>
</evidence>
<evidence type="ECO:0000305" key="18"/>
<evidence type="ECO:0000305" key="19">
    <source>
    </source>
</evidence>
<evidence type="ECO:0000312" key="20">
    <source>
        <dbReference type="HGNC" id="HGNC:18371"/>
    </source>
</evidence>
<reference key="1">
    <citation type="journal article" date="2002" name="Mol. Cell. Neurosci.">
        <title>The calsyntenins - a family of postsynaptic membrane proteins with distinct neuronal expression patterns.</title>
        <authorList>
            <person name="Hintsch G."/>
            <person name="Zurlinden A."/>
            <person name="Meskenaite V."/>
            <person name="Steuble M."/>
            <person name="Fink-Widmer K."/>
            <person name="Kinter J."/>
            <person name="Sonderegger P."/>
        </authorList>
    </citation>
    <scope>NUCLEOTIDE SEQUENCE [MRNA] (ISOFORM 1)</scope>
    <scope>TISSUE SPECIFICITY</scope>
    <source>
        <tissue>Brain</tissue>
    </source>
</reference>
<reference key="2">
    <citation type="journal article" date="2004" name="J. Biol. Chem.">
        <title>Coordinated metabolism of Alcadein and amyloid beta-protein precursor regulates FE65-dependent gene transactivation.</title>
        <authorList>
            <person name="Araki Y."/>
            <person name="Miyagi N."/>
            <person name="Kato N."/>
            <person name="Yoshida T."/>
            <person name="Wada S."/>
            <person name="Nishimura M."/>
            <person name="Komano H."/>
            <person name="Yamamoto T."/>
            <person name="De Strooper B."/>
            <person name="Yamamoto K."/>
            <person name="Suzuki T."/>
        </authorList>
    </citation>
    <scope>NUCLEOTIDE SEQUENCE [MRNA] (ISOFORM 2)</scope>
    <scope>PROTEOLYTIC PROCESSING</scope>
</reference>
<reference key="3">
    <citation type="journal article" date="1998" name="DNA Res.">
        <title>Prediction of the coding sequences of unidentified human genes. XI. The complete sequences of 100 new cDNA clones from brain which code for large proteins in vitro.</title>
        <authorList>
            <person name="Nagase T."/>
            <person name="Ishikawa K."/>
            <person name="Suyama M."/>
            <person name="Kikuno R."/>
            <person name="Miyajima N."/>
            <person name="Tanaka A."/>
            <person name="Kotani H."/>
            <person name="Nomura N."/>
            <person name="Ohara O."/>
        </authorList>
    </citation>
    <scope>NUCLEOTIDE SEQUENCE [LARGE SCALE MRNA] (ISOFORM 2)</scope>
    <source>
        <tissue>Brain</tissue>
    </source>
</reference>
<reference key="4">
    <citation type="journal article" date="2006" name="Nature">
        <title>The finished DNA sequence of human chromosome 12.</title>
        <authorList>
            <person name="Scherer S.E."/>
            <person name="Muzny D.M."/>
            <person name="Buhay C.J."/>
            <person name="Chen R."/>
            <person name="Cree A."/>
            <person name="Ding Y."/>
            <person name="Dugan-Rocha S."/>
            <person name="Gill R."/>
            <person name="Gunaratne P."/>
            <person name="Harris R.A."/>
            <person name="Hawes A.C."/>
            <person name="Hernandez J."/>
            <person name="Hodgson A.V."/>
            <person name="Hume J."/>
            <person name="Jackson A."/>
            <person name="Khan Z.M."/>
            <person name="Kovar-Smith C."/>
            <person name="Lewis L.R."/>
            <person name="Lozado R.J."/>
            <person name="Metzker M.L."/>
            <person name="Milosavljevic A."/>
            <person name="Miner G.R."/>
            <person name="Montgomery K.T."/>
            <person name="Morgan M.B."/>
            <person name="Nazareth L.V."/>
            <person name="Scott G."/>
            <person name="Sodergren E."/>
            <person name="Song X.-Z."/>
            <person name="Steffen D."/>
            <person name="Lovering R.C."/>
            <person name="Wheeler D.A."/>
            <person name="Worley K.C."/>
            <person name="Yuan Y."/>
            <person name="Zhang Z."/>
            <person name="Adams C.Q."/>
            <person name="Ansari-Lari M.A."/>
            <person name="Ayele M."/>
            <person name="Brown M.J."/>
            <person name="Chen G."/>
            <person name="Chen Z."/>
            <person name="Clerc-Blankenburg K.P."/>
            <person name="Davis C."/>
            <person name="Delgado O."/>
            <person name="Dinh H.H."/>
            <person name="Draper H."/>
            <person name="Gonzalez-Garay M.L."/>
            <person name="Havlak P."/>
            <person name="Jackson L.R."/>
            <person name="Jacob L.S."/>
            <person name="Kelly S.H."/>
            <person name="Li L."/>
            <person name="Li Z."/>
            <person name="Liu J."/>
            <person name="Liu W."/>
            <person name="Lu J."/>
            <person name="Maheshwari M."/>
            <person name="Nguyen B.-V."/>
            <person name="Okwuonu G.O."/>
            <person name="Pasternak S."/>
            <person name="Perez L.M."/>
            <person name="Plopper F.J.H."/>
            <person name="Santibanez J."/>
            <person name="Shen H."/>
            <person name="Tabor P.E."/>
            <person name="Verduzco D."/>
            <person name="Waldron L."/>
            <person name="Wang Q."/>
            <person name="Williams G.A."/>
            <person name="Zhang J."/>
            <person name="Zhou J."/>
            <person name="Allen C.C."/>
            <person name="Amin A.G."/>
            <person name="Anyalebechi V."/>
            <person name="Bailey M."/>
            <person name="Barbaria J.A."/>
            <person name="Bimage K.E."/>
            <person name="Bryant N.P."/>
            <person name="Burch P.E."/>
            <person name="Burkett C.E."/>
            <person name="Burrell K.L."/>
            <person name="Calderon E."/>
            <person name="Cardenas V."/>
            <person name="Carter K."/>
            <person name="Casias K."/>
            <person name="Cavazos I."/>
            <person name="Cavazos S.R."/>
            <person name="Ceasar H."/>
            <person name="Chacko J."/>
            <person name="Chan S.N."/>
            <person name="Chavez D."/>
            <person name="Christopoulos C."/>
            <person name="Chu J."/>
            <person name="Cockrell R."/>
            <person name="Cox C.D."/>
            <person name="Dang M."/>
            <person name="Dathorne S.R."/>
            <person name="David R."/>
            <person name="Davis C.M."/>
            <person name="Davy-Carroll L."/>
            <person name="Deshazo D.R."/>
            <person name="Donlin J.E."/>
            <person name="D'Souza L."/>
            <person name="Eaves K.A."/>
            <person name="Egan A."/>
            <person name="Emery-Cohen A.J."/>
            <person name="Escotto M."/>
            <person name="Flagg N."/>
            <person name="Forbes L.D."/>
            <person name="Gabisi A.M."/>
            <person name="Garza M."/>
            <person name="Hamilton C."/>
            <person name="Henderson N."/>
            <person name="Hernandez O."/>
            <person name="Hines S."/>
            <person name="Hogues M.E."/>
            <person name="Huang M."/>
            <person name="Idlebird D.G."/>
            <person name="Johnson R."/>
            <person name="Jolivet A."/>
            <person name="Jones S."/>
            <person name="Kagan R."/>
            <person name="King L.M."/>
            <person name="Leal B."/>
            <person name="Lebow H."/>
            <person name="Lee S."/>
            <person name="LeVan J.M."/>
            <person name="Lewis L.C."/>
            <person name="London P."/>
            <person name="Lorensuhewa L.M."/>
            <person name="Loulseged H."/>
            <person name="Lovett D.A."/>
            <person name="Lucier A."/>
            <person name="Lucier R.L."/>
            <person name="Ma J."/>
            <person name="Madu R.C."/>
            <person name="Mapua P."/>
            <person name="Martindale A.D."/>
            <person name="Martinez E."/>
            <person name="Massey E."/>
            <person name="Mawhiney S."/>
            <person name="Meador M.G."/>
            <person name="Mendez S."/>
            <person name="Mercado C."/>
            <person name="Mercado I.C."/>
            <person name="Merritt C.E."/>
            <person name="Miner Z.L."/>
            <person name="Minja E."/>
            <person name="Mitchell T."/>
            <person name="Mohabbat F."/>
            <person name="Mohabbat K."/>
            <person name="Montgomery B."/>
            <person name="Moore N."/>
            <person name="Morris S."/>
            <person name="Munidasa M."/>
            <person name="Ngo R.N."/>
            <person name="Nguyen N.B."/>
            <person name="Nickerson E."/>
            <person name="Nwaokelemeh O.O."/>
            <person name="Nwokenkwo S."/>
            <person name="Obregon M."/>
            <person name="Oguh M."/>
            <person name="Oragunye N."/>
            <person name="Oviedo R.J."/>
            <person name="Parish B.J."/>
            <person name="Parker D.N."/>
            <person name="Parrish J."/>
            <person name="Parks K.L."/>
            <person name="Paul H.A."/>
            <person name="Payton B.A."/>
            <person name="Perez A."/>
            <person name="Perrin W."/>
            <person name="Pickens A."/>
            <person name="Primus E.L."/>
            <person name="Pu L.-L."/>
            <person name="Puazo M."/>
            <person name="Quiles M.M."/>
            <person name="Quiroz J.B."/>
            <person name="Rabata D."/>
            <person name="Reeves K."/>
            <person name="Ruiz S.J."/>
            <person name="Shao H."/>
            <person name="Sisson I."/>
            <person name="Sonaike T."/>
            <person name="Sorelle R.P."/>
            <person name="Sutton A.E."/>
            <person name="Svatek A.F."/>
            <person name="Svetz L.A."/>
            <person name="Tamerisa K.S."/>
            <person name="Taylor T.R."/>
            <person name="Teague B."/>
            <person name="Thomas N."/>
            <person name="Thorn R.D."/>
            <person name="Trejos Z.Y."/>
            <person name="Trevino B.K."/>
            <person name="Ukegbu O.N."/>
            <person name="Urban J.B."/>
            <person name="Vasquez L.I."/>
            <person name="Vera V.A."/>
            <person name="Villasana D.M."/>
            <person name="Wang L."/>
            <person name="Ward-Moore S."/>
            <person name="Warren J.T."/>
            <person name="Wei X."/>
            <person name="White F."/>
            <person name="Williamson A.L."/>
            <person name="Wleczyk R."/>
            <person name="Wooden H.S."/>
            <person name="Wooden S.H."/>
            <person name="Yen J."/>
            <person name="Yoon L."/>
            <person name="Yoon V."/>
            <person name="Zorrilla S.E."/>
            <person name="Nelson D."/>
            <person name="Kucherlapati R."/>
            <person name="Weinstock G."/>
            <person name="Gibbs R.A."/>
        </authorList>
    </citation>
    <scope>NUCLEOTIDE SEQUENCE [LARGE SCALE GENOMIC DNA]</scope>
</reference>
<reference key="5">
    <citation type="submission" date="2005-09" db="EMBL/GenBank/DDBJ databases">
        <authorList>
            <person name="Mural R.J."/>
            <person name="Istrail S."/>
            <person name="Sutton G.G."/>
            <person name="Florea L."/>
            <person name="Halpern A.L."/>
            <person name="Mobarry C.M."/>
            <person name="Lippert R."/>
            <person name="Walenz B."/>
            <person name="Shatkay H."/>
            <person name="Dew I."/>
            <person name="Miller J.R."/>
            <person name="Flanigan M.J."/>
            <person name="Edwards N.J."/>
            <person name="Bolanos R."/>
            <person name="Fasulo D."/>
            <person name="Halldorsson B.V."/>
            <person name="Hannenhalli S."/>
            <person name="Turner R."/>
            <person name="Yooseph S."/>
            <person name="Lu F."/>
            <person name="Nusskern D.R."/>
            <person name="Shue B.C."/>
            <person name="Zheng X.H."/>
            <person name="Zhong F."/>
            <person name="Delcher A.L."/>
            <person name="Huson D.H."/>
            <person name="Kravitz S.A."/>
            <person name="Mouchard L."/>
            <person name="Reinert K."/>
            <person name="Remington K.A."/>
            <person name="Clark A.G."/>
            <person name="Waterman M.S."/>
            <person name="Eichler E.E."/>
            <person name="Adams M.D."/>
            <person name="Hunkapiller M.W."/>
            <person name="Myers E.W."/>
            <person name="Venter J.C."/>
        </authorList>
    </citation>
    <scope>NUCLEOTIDE SEQUENCE [LARGE SCALE GENOMIC DNA]</scope>
</reference>
<reference key="6">
    <citation type="journal article" date="2004" name="Genome Res.">
        <title>The status, quality, and expansion of the NIH full-length cDNA project: the Mammalian Gene Collection (MGC).</title>
        <authorList>
            <consortium name="The MGC Project Team"/>
        </authorList>
    </citation>
    <scope>NUCLEOTIDE SEQUENCE [LARGE SCALE MRNA] (ISOFORM 1)</scope>
    <source>
        <tissue>Blood</tissue>
        <tissue>Brain</tissue>
    </source>
</reference>
<reference key="7">
    <citation type="journal article" date="2003" name="J. Biol. Chem.">
        <title>Novel cadherin-related membrane proteins, Alcadeins, enhance the X11-like protein-mediated stabilization of amyloid beta-protein precursor metabolism.</title>
        <authorList>
            <person name="Araki Y."/>
            <person name="Tomita S."/>
            <person name="Yamaguchi H."/>
            <person name="Miyagi N."/>
            <person name="Sumioka A."/>
            <person name="Kirino Y."/>
            <person name="Suzuki T."/>
        </authorList>
    </citation>
    <scope>FUNCTION</scope>
    <scope>TISSUE SPECIFICITY</scope>
    <scope>INTERACTION WITH APBA2</scope>
</reference>
<reference key="8">
    <citation type="journal article" date="2014" name="J. Biol. Chem.">
        <title>Calsyntenin-3 molecular architecture and interaction with neurexin 1alpha.</title>
        <authorList>
            <person name="Lu Z."/>
            <person name="Wang Y."/>
            <person name="Chen F."/>
            <person name="Tong H."/>
            <person name="Reddy M.V."/>
            <person name="Luo L."/>
            <person name="Seshadrinathan S."/>
            <person name="Zhang L."/>
            <person name="Holthauzen L.M."/>
            <person name="Craig A.M."/>
            <person name="Ren G."/>
            <person name="Rudenko G."/>
        </authorList>
    </citation>
    <scope>FUNCTION</scope>
    <scope>INTERACTION WITH NRXN1</scope>
</reference>
<reference key="9">
    <citation type="journal article" date="2020" name="Front. Endocrinol.">
        <title>Calsyntenin 3beta is dynamically regulated by temperature in murine brown adipose and marks human multilocular fat.</title>
        <authorList>
            <person name="Plucinska K."/>
            <person name="Jespersen N.Z."/>
            <person name="Brown E.L."/>
            <person name="Petersen P.S."/>
            <person name="Rupar K."/>
            <person name="Nielsen S."/>
            <person name="Scheele C."/>
            <person name="Emanuelli B."/>
        </authorList>
    </citation>
    <scope>TISSUE SPECIFICITY (ISOFORM CLSTN3BETA)</scope>
</reference>
<reference key="10">
    <citation type="journal article" date="2006" name="Science">
        <title>The consensus coding sequences of human breast and colorectal cancers.</title>
        <authorList>
            <person name="Sjoeblom T."/>
            <person name="Jones S."/>
            <person name="Wood L.D."/>
            <person name="Parsons D.W."/>
            <person name="Lin J."/>
            <person name="Barber T.D."/>
            <person name="Mandelker D."/>
            <person name="Leary R.J."/>
            <person name="Ptak J."/>
            <person name="Silliman N."/>
            <person name="Szabo S."/>
            <person name="Buckhaults P."/>
            <person name="Farrell C."/>
            <person name="Meeh P."/>
            <person name="Markowitz S.D."/>
            <person name="Willis J."/>
            <person name="Dawson D."/>
            <person name="Willson J.K.V."/>
            <person name="Gazdar A.F."/>
            <person name="Hartigan J."/>
            <person name="Wu L."/>
            <person name="Liu C."/>
            <person name="Parmigiani G."/>
            <person name="Park B.H."/>
            <person name="Bachman K.E."/>
            <person name="Papadopoulos N."/>
            <person name="Vogelstein B."/>
            <person name="Kinzler K.W."/>
            <person name="Velculescu V.E."/>
        </authorList>
    </citation>
    <scope>VARIANT [LARGE SCALE ANALYSIS] TYR-874</scope>
</reference>
<reference key="11">
    <citation type="journal article" date="2021" name="Int. J. Biol. Macromol.">
        <title>Calsyntenin-3 interacts with the sodium-dependent vitamin C transporter-2 to regulate vitamin C uptake.</title>
        <authorList>
            <person name="Subramanian V.S."/>
            <person name="Teafatiller T."/>
            <person name="Vidal J."/>
            <person name="Gunaratne G.S."/>
            <person name="Rodriguez-Ortiz C.J."/>
            <person name="Kitazawa M."/>
            <person name="Marchant J.S."/>
        </authorList>
    </citation>
    <scope>FUNCTION</scope>
    <scope>INTERACTION WITH SLC23A2</scope>
</reference>
<reference key="12">
    <citation type="journal article" date="2022" name="Mol. Metab.">
        <title>CLSTN3 gene variant associates with obesity risk and contributes to dysfunction in white adipose tissue.</title>
        <authorList>
            <person name="Bai N."/>
            <person name="Lu X."/>
            <person name="Jin L."/>
            <person name="Alimujiang M."/>
            <person name="Ma J."/>
            <person name="Hu F."/>
            <person name="Xu Y."/>
            <person name="Sun J."/>
            <person name="Xu J."/>
            <person name="Zhang R."/>
            <person name="Han J."/>
            <person name="Hu C."/>
            <person name="Yang Y."/>
        </authorList>
    </citation>
    <scope>VARIANT GLN-142 (ISOFORM CLSTN3BETA)</scope>
</reference>
<proteinExistence type="evidence at protein level"/>
<sequence length="956" mass="106098">MTLLLLPLLLASLLASCSCNKANKHKPWIEAEYQGIVMENDNTVLLNPPLFALDKDAPLRYAGEICGFRLHGSGVPFEAVILDKATGEGLIRAKEPVDCEAQKEHTFTIQAYDCGEGPDGANTKKSHKATVHVRVNDVNEFAPVFVERLYRAAVTEGKLYDRILRVEAIDGDCSPQYSQICYYEILTPNTPFLIDNDGNIENTEKLQYSGERLYKFTVTAYDCGKKRAADDAEVEIQVKPTCKPSWQGWNKRIEYAPGAGSLALFPGIRLETCDEPLWNIQATIELQTSHVAKGCDRDNYSERALRKLCGAATGEVDLLPMPGPNANWTAGLSVHYSQDSSLIYWFNGTQAVQVPLGGPSGLGSGPQDSLSDHFTLSFWMKHGVTPNKGKKEEETIVCNTVQNEDGFSHYSLTVHGCRIAFLYWPLLESARPVKFLWKLEQVCDDEWHHYALNLEFPTVTLYTDGISFDPALIHDNGLIHPPRREPALMIGACWTEEKNKEKEKGDNSTDTTQGDPLSIHHYFHGYLAGFSVRSGRLESREVIECLYACREGLDYRDFESLGKGMKVHVNPSQSLLTLEGDDVETFNHALQHVAYMNTLRFATPGVRPLRLTTAVKCFSEESCVSIPEVEGYVVVLQPDAPQILLSGTAHFARPAVDFEGTNGVPLFPDLQITCSISHQVEAKKDESWQGTVTDTRMSDEIVHNLDGCEISLVGDDLDPERESLLLDTTSLQQRGLELTNTSAYLTIAGVESITVYEEILRQARYRLRHGAALYTRKFRLSCSEMNGRYSSNEFIVEVNVLHSMNRVAHPSHVLSSQQFLHRGHQPPPEMAGHSLASSHRNSMIPSAATLIIVVCVGFLVLMVVLGLVRIHSLHRRVSGAGGPPGASSDPKDPDLFWDDSALTIIVNPMESYQNRQSCVTGAVGGQQEDEDSSDSEVADSPSSDERRIIETPPHRY</sequence>
<organism>
    <name type="scientific">Homo sapiens</name>
    <name type="common">Human</name>
    <dbReference type="NCBI Taxonomy" id="9606"/>
    <lineage>
        <taxon>Eukaryota</taxon>
        <taxon>Metazoa</taxon>
        <taxon>Chordata</taxon>
        <taxon>Craniata</taxon>
        <taxon>Vertebrata</taxon>
        <taxon>Euteleostomi</taxon>
        <taxon>Mammalia</taxon>
        <taxon>Eutheria</taxon>
        <taxon>Euarchontoglires</taxon>
        <taxon>Primates</taxon>
        <taxon>Haplorrhini</taxon>
        <taxon>Catarrhini</taxon>
        <taxon>Hominidae</taxon>
        <taxon>Homo</taxon>
    </lineage>
</organism>
<protein>
    <recommendedName>
        <fullName evidence="14">Calsyntenin-3</fullName>
    </recommendedName>
    <alternativeName>
        <fullName evidence="15">Alcadein-beta</fullName>
        <shortName evidence="15">Alc-beta</shortName>
    </alternativeName>
</protein>
<dbReference type="EMBL" id="AJ277460">
    <property type="protein sequence ID" value="CAC33084.1"/>
    <property type="molecule type" value="mRNA"/>
</dbReference>
<dbReference type="EMBL" id="AY753302">
    <property type="protein sequence ID" value="AAV30552.1"/>
    <property type="molecule type" value="mRNA"/>
</dbReference>
<dbReference type="EMBL" id="AB018269">
    <property type="protein sequence ID" value="BAA34446.2"/>
    <property type="status" value="ALT_INIT"/>
    <property type="molecule type" value="mRNA"/>
</dbReference>
<dbReference type="EMBL" id="AC018653">
    <property type="status" value="NOT_ANNOTATED_CDS"/>
    <property type="molecule type" value="Genomic_DNA"/>
</dbReference>
<dbReference type="EMBL" id="KF455598">
    <property type="status" value="NOT_ANNOTATED_CDS"/>
    <property type="molecule type" value="Genomic_DNA"/>
</dbReference>
<dbReference type="EMBL" id="CH471116">
    <property type="protein sequence ID" value="EAW88677.1"/>
    <property type="molecule type" value="Genomic_DNA"/>
</dbReference>
<dbReference type="EMBL" id="CH471116">
    <property type="protein sequence ID" value="EAW88678.1"/>
    <property type="molecule type" value="Genomic_DNA"/>
</dbReference>
<dbReference type="EMBL" id="CH471116">
    <property type="protein sequence ID" value="EAW88679.1"/>
    <property type="molecule type" value="Genomic_DNA"/>
</dbReference>
<dbReference type="EMBL" id="BC104767">
    <property type="protein sequence ID" value="AAI04768.1"/>
    <property type="molecule type" value="mRNA"/>
</dbReference>
<dbReference type="EMBL" id="BC111491">
    <property type="protein sequence ID" value="AAI11492.1"/>
    <property type="molecule type" value="mRNA"/>
</dbReference>
<dbReference type="EMBL" id="BC112283">
    <property type="protein sequence ID" value="AAI12284.1"/>
    <property type="molecule type" value="mRNA"/>
</dbReference>
<dbReference type="CCDS" id="CCDS8575.1">
    <molecule id="Q9BQT9-1"/>
</dbReference>
<dbReference type="RefSeq" id="NP_055533.2">
    <molecule id="Q9BQT9-1"/>
    <property type="nucleotide sequence ID" value="NM_014718.3"/>
</dbReference>
<dbReference type="RefSeq" id="XP_006719226.1">
    <property type="nucleotide sequence ID" value="XM_006719163.3"/>
</dbReference>
<dbReference type="RefSeq" id="XP_047285876.1">
    <molecule id="Q9BQT9-1"/>
    <property type="nucleotide sequence ID" value="XM_047429920.1"/>
</dbReference>
<dbReference type="RefSeq" id="XP_047285877.1">
    <molecule id="Q9BQT9-1"/>
    <property type="nucleotide sequence ID" value="XM_047429921.1"/>
</dbReference>
<dbReference type="RefSeq" id="XP_054188522.1">
    <molecule id="Q9BQT9-1"/>
    <property type="nucleotide sequence ID" value="XM_054332547.1"/>
</dbReference>
<dbReference type="RefSeq" id="XP_054229881.1">
    <molecule id="Q9BQT9-1"/>
    <property type="nucleotide sequence ID" value="XM_054373906.1"/>
</dbReference>
<dbReference type="BioGRID" id="115094">
    <property type="interactions" value="105"/>
</dbReference>
<dbReference type="FunCoup" id="Q9BQT9">
    <property type="interactions" value="299"/>
</dbReference>
<dbReference type="IntAct" id="Q9BQT9">
    <property type="interactions" value="64"/>
</dbReference>
<dbReference type="MINT" id="Q9BQT9"/>
<dbReference type="STRING" id="9606.ENSP00000266546"/>
<dbReference type="GlyCosmos" id="Q9BQT9">
    <property type="glycosylation" value="5 sites, No reported glycans"/>
</dbReference>
<dbReference type="GlyGen" id="Q9BQT9">
    <property type="glycosylation" value="8 sites, 1 N-linked glycan (1 site), 1 O-linked glycan (3 sites)"/>
</dbReference>
<dbReference type="iPTMnet" id="Q9BQT9"/>
<dbReference type="PhosphoSitePlus" id="Q9BQT9"/>
<dbReference type="BioMuta" id="CLSTN3"/>
<dbReference type="DMDM" id="23396507"/>
<dbReference type="jPOST" id="Q9BQT9"/>
<dbReference type="MassIVE" id="Q9BQT9"/>
<dbReference type="PaxDb" id="9606-ENSP00000266546"/>
<dbReference type="PeptideAtlas" id="Q9BQT9"/>
<dbReference type="ProteomicsDB" id="78722">
    <molecule id="Q9BQT9-1"/>
</dbReference>
<dbReference type="ProteomicsDB" id="78723">
    <molecule id="Q9BQT9-2"/>
</dbReference>
<dbReference type="Antibodypedia" id="42025">
    <property type="antibodies" value="35 antibodies from 15 providers"/>
</dbReference>
<dbReference type="DNASU" id="9746"/>
<dbReference type="Ensembl" id="ENST00000266546.11">
    <molecule id="Q9BQT9-1"/>
    <property type="protein sequence ID" value="ENSP00000266546.6"/>
    <property type="gene ID" value="ENSG00000139182.15"/>
</dbReference>
<dbReference type="Ensembl" id="ENST00000535313.2">
    <molecule id="Q9BQT9-3"/>
    <property type="protein sequence ID" value="ENSP00000496782.1"/>
    <property type="gene ID" value="ENSG00000139182.15"/>
</dbReference>
<dbReference type="Ensembl" id="ENST00000672495.1">
    <molecule id="Q9BQT9-1"/>
    <property type="protein sequence ID" value="ENSP00000500510.1"/>
    <property type="gene ID" value="ENSG00000288427.1"/>
</dbReference>
<dbReference type="Ensembl" id="ENST00000673375.1">
    <molecule id="Q9BQT9-3"/>
    <property type="protein sequence ID" value="ENSP00000500213.1"/>
    <property type="gene ID" value="ENSG00000288427.1"/>
</dbReference>
<dbReference type="GeneID" id="9746"/>
<dbReference type="KEGG" id="hsa:9746"/>
<dbReference type="MANE-Select" id="ENST00000266546.11">
    <property type="protein sequence ID" value="ENSP00000266546.6"/>
    <property type="RefSeq nucleotide sequence ID" value="NM_014718.4"/>
    <property type="RefSeq protein sequence ID" value="NP_055533.2"/>
</dbReference>
<dbReference type="UCSC" id="uc001qsr.4">
    <molecule id="Q9BQT9-1"/>
    <property type="organism name" value="human"/>
</dbReference>
<dbReference type="AGR" id="HGNC:18371"/>
<dbReference type="CTD" id="9746"/>
<dbReference type="DisGeNET" id="9746"/>
<dbReference type="GeneCards" id="CLSTN3"/>
<dbReference type="HGNC" id="HGNC:18371">
    <property type="gene designation" value="CLSTN3"/>
</dbReference>
<dbReference type="HPA" id="ENSG00000139182">
    <property type="expression patterns" value="Tissue enhanced (brain)"/>
</dbReference>
<dbReference type="MIM" id="611324">
    <property type="type" value="gene"/>
</dbReference>
<dbReference type="neXtProt" id="NX_Q9BQT9"/>
<dbReference type="OpenTargets" id="ENSG00000139182"/>
<dbReference type="PharmGKB" id="PA38320"/>
<dbReference type="VEuPathDB" id="HostDB:ENSG00000139182"/>
<dbReference type="eggNOG" id="KOG1834">
    <property type="taxonomic scope" value="Eukaryota"/>
</dbReference>
<dbReference type="GeneTree" id="ENSGT00950000183086"/>
<dbReference type="HOGENOM" id="CLU_008904_0_0_1"/>
<dbReference type="InParanoid" id="Q9BQT9"/>
<dbReference type="OMA" id="YTVQCAM"/>
<dbReference type="OrthoDB" id="10012272at2759"/>
<dbReference type="PAN-GO" id="Q9BQT9">
    <property type="GO annotations" value="4 GO annotations based on evolutionary models"/>
</dbReference>
<dbReference type="PhylomeDB" id="Q9BQT9"/>
<dbReference type="TreeFam" id="TF315946"/>
<dbReference type="PathwayCommons" id="Q9BQT9"/>
<dbReference type="SignaLink" id="Q9BQT9"/>
<dbReference type="BioGRID-ORCS" id="9746">
    <property type="hits" value="16 hits in 1153 CRISPR screens"/>
</dbReference>
<dbReference type="ChiTaRS" id="CLSTN3">
    <property type="organism name" value="human"/>
</dbReference>
<dbReference type="GenomeRNAi" id="9746"/>
<dbReference type="Pharos" id="Q9BQT9">
    <property type="development level" value="Tbio"/>
</dbReference>
<dbReference type="PRO" id="PR:Q9BQT9"/>
<dbReference type="Proteomes" id="UP000005640">
    <property type="component" value="Chromosome 12"/>
</dbReference>
<dbReference type="RNAct" id="Q9BQT9">
    <property type="molecule type" value="protein"/>
</dbReference>
<dbReference type="Bgee" id="ENSG00000139182">
    <property type="expression patterns" value="Expressed in cerebellum and 103 other cell types or tissues"/>
</dbReference>
<dbReference type="ExpressionAtlas" id="Q9BQT9">
    <property type="expression patterns" value="baseline and differential"/>
</dbReference>
<dbReference type="GO" id="GO:0009986">
    <property type="term" value="C:cell surface"/>
    <property type="evidence" value="ECO:0000318"/>
    <property type="project" value="GO_Central"/>
</dbReference>
<dbReference type="GO" id="GO:0030425">
    <property type="term" value="C:dendrite"/>
    <property type="evidence" value="ECO:0007669"/>
    <property type="project" value="UniProtKB-SubCell"/>
</dbReference>
<dbReference type="GO" id="GO:0005789">
    <property type="term" value="C:endoplasmic reticulum membrane"/>
    <property type="evidence" value="ECO:0000250"/>
    <property type="project" value="UniProtKB"/>
</dbReference>
<dbReference type="GO" id="GO:0098982">
    <property type="term" value="C:GABA-ergic synapse"/>
    <property type="evidence" value="ECO:0007669"/>
    <property type="project" value="Ensembl"/>
</dbReference>
<dbReference type="GO" id="GO:0098978">
    <property type="term" value="C:glutamatergic synapse"/>
    <property type="evidence" value="ECO:0007669"/>
    <property type="project" value="Ensembl"/>
</dbReference>
<dbReference type="GO" id="GO:0000139">
    <property type="term" value="C:Golgi membrane"/>
    <property type="evidence" value="ECO:0007669"/>
    <property type="project" value="UniProtKB-SubCell"/>
</dbReference>
<dbReference type="GO" id="GO:0005811">
    <property type="term" value="C:lipid droplet"/>
    <property type="evidence" value="ECO:0000250"/>
    <property type="project" value="UniProtKB"/>
</dbReference>
<dbReference type="GO" id="GO:0044232">
    <property type="term" value="C:organelle membrane contact site"/>
    <property type="evidence" value="ECO:0000250"/>
    <property type="project" value="UniProtKB"/>
</dbReference>
<dbReference type="GO" id="GO:0098839">
    <property type="term" value="C:postsynaptic density membrane"/>
    <property type="evidence" value="ECO:0007669"/>
    <property type="project" value="Ensembl"/>
</dbReference>
<dbReference type="GO" id="GO:0045211">
    <property type="term" value="C:postsynaptic membrane"/>
    <property type="evidence" value="ECO:0000318"/>
    <property type="project" value="GO_Central"/>
</dbReference>
<dbReference type="GO" id="GO:0032991">
    <property type="term" value="C:protein-containing complex"/>
    <property type="evidence" value="ECO:0007669"/>
    <property type="project" value="Ensembl"/>
</dbReference>
<dbReference type="GO" id="GO:0005509">
    <property type="term" value="F:calcium ion binding"/>
    <property type="evidence" value="ECO:0007669"/>
    <property type="project" value="InterPro"/>
</dbReference>
<dbReference type="GO" id="GO:0098632">
    <property type="term" value="F:cell-cell adhesion mediator activity"/>
    <property type="evidence" value="ECO:0000314"/>
    <property type="project" value="UniProtKB"/>
</dbReference>
<dbReference type="GO" id="GO:0004857">
    <property type="term" value="F:enzyme inhibitor activity"/>
    <property type="evidence" value="ECO:0000250"/>
    <property type="project" value="UniProtKB"/>
</dbReference>
<dbReference type="GO" id="GO:0042043">
    <property type="term" value="F:neurexin family protein binding"/>
    <property type="evidence" value="ECO:0000314"/>
    <property type="project" value="UniProtKB"/>
</dbReference>
<dbReference type="GO" id="GO:1990845">
    <property type="term" value="P:adaptive thermogenesis"/>
    <property type="evidence" value="ECO:0000250"/>
    <property type="project" value="UniProtKB"/>
</dbReference>
<dbReference type="GO" id="GO:0106106">
    <property type="term" value="P:cold-induced thermogenesis"/>
    <property type="evidence" value="ECO:0000250"/>
    <property type="project" value="UniProtKB"/>
</dbReference>
<dbReference type="GO" id="GO:1904861">
    <property type="term" value="P:excitatory synapse assembly"/>
    <property type="evidence" value="ECO:0000250"/>
    <property type="project" value="UniProtKB"/>
</dbReference>
<dbReference type="GO" id="GO:0007156">
    <property type="term" value="P:homophilic cell adhesion via plasma membrane adhesion molecules"/>
    <property type="evidence" value="ECO:0007669"/>
    <property type="project" value="InterPro"/>
</dbReference>
<dbReference type="GO" id="GO:1904862">
    <property type="term" value="P:inhibitory synapse assembly"/>
    <property type="evidence" value="ECO:0000250"/>
    <property type="project" value="UniProtKB"/>
</dbReference>
<dbReference type="GO" id="GO:0019852">
    <property type="term" value="P:L-ascorbic acid metabolic process"/>
    <property type="evidence" value="ECO:0000314"/>
    <property type="project" value="UniProtKB"/>
</dbReference>
<dbReference type="GO" id="GO:1904890">
    <property type="term" value="P:negative regulation of excitatory synapse assembly"/>
    <property type="evidence" value="ECO:0000250"/>
    <property type="project" value="UniProtKB"/>
</dbReference>
<dbReference type="GO" id="GO:0160078">
    <property type="term" value="P:negative regulation of lipid droplet fusion"/>
    <property type="evidence" value="ECO:0000250"/>
    <property type="project" value="UniProtKB"/>
</dbReference>
<dbReference type="GO" id="GO:0010888">
    <property type="term" value="P:negative regulation of lipid storage"/>
    <property type="evidence" value="ECO:0000250"/>
    <property type="project" value="UniProtKB"/>
</dbReference>
<dbReference type="GO" id="GO:1905704">
    <property type="term" value="P:positive regulation of inhibitory synapse assembly"/>
    <property type="evidence" value="ECO:0000250"/>
    <property type="project" value="UniProtKB"/>
</dbReference>
<dbReference type="GO" id="GO:0050996">
    <property type="term" value="P:positive regulation of lipid catabolic process"/>
    <property type="evidence" value="ECO:0000250"/>
    <property type="project" value="UniProtKB"/>
</dbReference>
<dbReference type="GO" id="GO:1902474">
    <property type="term" value="P:positive regulation of protein localization to synapse"/>
    <property type="evidence" value="ECO:0007669"/>
    <property type="project" value="Ensembl"/>
</dbReference>
<dbReference type="GO" id="GO:0051965">
    <property type="term" value="P:positive regulation of synapse assembly"/>
    <property type="evidence" value="ECO:0000318"/>
    <property type="project" value="GO_Central"/>
</dbReference>
<dbReference type="GO" id="GO:0050806">
    <property type="term" value="P:positive regulation of synaptic transmission"/>
    <property type="evidence" value="ECO:0000318"/>
    <property type="project" value="GO_Central"/>
</dbReference>
<dbReference type="GO" id="GO:0009306">
    <property type="term" value="P:protein secretion"/>
    <property type="evidence" value="ECO:0000250"/>
    <property type="project" value="UniProtKB"/>
</dbReference>
<dbReference type="GO" id="GO:0001558">
    <property type="term" value="P:regulation of cell growth"/>
    <property type="evidence" value="ECO:0007669"/>
    <property type="project" value="Ensembl"/>
</dbReference>
<dbReference type="GO" id="GO:1904889">
    <property type="term" value="P:regulation of excitatory synapse assembly"/>
    <property type="evidence" value="ECO:0000250"/>
    <property type="project" value="UniProtKB"/>
</dbReference>
<dbReference type="GO" id="GO:1905606">
    <property type="term" value="P:regulation of presynapse assembly"/>
    <property type="evidence" value="ECO:0007669"/>
    <property type="project" value="Ensembl"/>
</dbReference>
<dbReference type="GO" id="GO:0051963">
    <property type="term" value="P:regulation of synapse assembly"/>
    <property type="evidence" value="ECO:0000314"/>
    <property type="project" value="UniProtKB"/>
</dbReference>
<dbReference type="GO" id="GO:0097490">
    <property type="term" value="P:sympathetic neuron projection extension"/>
    <property type="evidence" value="ECO:0000250"/>
    <property type="project" value="UniProtKB"/>
</dbReference>
<dbReference type="GO" id="GO:0007416">
    <property type="term" value="P:synapse assembly"/>
    <property type="evidence" value="ECO:0007669"/>
    <property type="project" value="Ensembl"/>
</dbReference>
<dbReference type="GO" id="GO:0051932">
    <property type="term" value="P:synaptic transmission, GABAergic"/>
    <property type="evidence" value="ECO:0007669"/>
    <property type="project" value="Ensembl"/>
</dbReference>
<dbReference type="GO" id="GO:0035249">
    <property type="term" value="P:synaptic transmission, glutamatergic"/>
    <property type="evidence" value="ECO:0007669"/>
    <property type="project" value="Ensembl"/>
</dbReference>
<dbReference type="CDD" id="cd11304">
    <property type="entry name" value="Cadherin_repeat"/>
    <property type="match status" value="2"/>
</dbReference>
<dbReference type="FunFam" id="2.60.40.60:FF:000025">
    <property type="entry name" value="Calsyntenin 1"/>
    <property type="match status" value="1"/>
</dbReference>
<dbReference type="FunFam" id="2.60.120.200:FF:000069">
    <property type="entry name" value="Calsyntenin 3"/>
    <property type="match status" value="1"/>
</dbReference>
<dbReference type="FunFam" id="2.60.40.60:FF:000062">
    <property type="entry name" value="Calsyntenin 3"/>
    <property type="match status" value="1"/>
</dbReference>
<dbReference type="Gene3D" id="2.60.120.200">
    <property type="match status" value="1"/>
</dbReference>
<dbReference type="Gene3D" id="2.60.40.60">
    <property type="entry name" value="Cadherins"/>
    <property type="match status" value="2"/>
</dbReference>
<dbReference type="InterPro" id="IPR002126">
    <property type="entry name" value="Cadherin-like_dom"/>
</dbReference>
<dbReference type="InterPro" id="IPR015919">
    <property type="entry name" value="Cadherin-like_sf"/>
</dbReference>
<dbReference type="InterPro" id="IPR045588">
    <property type="entry name" value="CLSTN_C"/>
</dbReference>
<dbReference type="InterPro" id="IPR013320">
    <property type="entry name" value="ConA-like_dom_sf"/>
</dbReference>
<dbReference type="PANTHER" id="PTHR14139">
    <property type="entry name" value="CALSYNTENIN"/>
    <property type="match status" value="1"/>
</dbReference>
<dbReference type="PANTHER" id="PTHR14139:SF5">
    <property type="entry name" value="CALSYNTENIN-3"/>
    <property type="match status" value="1"/>
</dbReference>
<dbReference type="Pfam" id="PF19699">
    <property type="entry name" value="CLSTN_C"/>
    <property type="match status" value="1"/>
</dbReference>
<dbReference type="PRINTS" id="PR00205">
    <property type="entry name" value="CADHERIN"/>
</dbReference>
<dbReference type="SMART" id="SM00112">
    <property type="entry name" value="CA"/>
    <property type="match status" value="2"/>
</dbReference>
<dbReference type="SUPFAM" id="SSF49313">
    <property type="entry name" value="Cadherin-like"/>
    <property type="match status" value="2"/>
</dbReference>
<dbReference type="SUPFAM" id="SSF49899">
    <property type="entry name" value="Concanavalin A-like lectins/glucanases"/>
    <property type="match status" value="1"/>
</dbReference>
<dbReference type="PROSITE" id="PS50268">
    <property type="entry name" value="CADHERIN_2"/>
    <property type="match status" value="2"/>
</dbReference>
<accession>Q9BQT9</accession>
<accession>A0A3B3IRF8</accession>
<accession>D3DUT6</accession>
<accession>O94831</accession>
<accession>Q2T9J5</accession>
<accession>Q5UE57</accession>
<gene>
    <name evidence="16 20" type="primary">CLSTN3</name>
    <name type="synonym">CS3</name>
    <name evidence="17" type="synonym">KIAA0726</name>
</gene>